<gene>
    <name type="primary">rpl2</name>
</gene>
<name>RK2_PHYPA</name>
<proteinExistence type="inferred from homology"/>
<protein>
    <recommendedName>
        <fullName evidence="2">Large ribosomal subunit protein uL2c</fullName>
    </recommendedName>
    <alternativeName>
        <fullName evidence="4">50S ribosomal protein L2, chloroplastic</fullName>
    </alternativeName>
</protein>
<dbReference type="EMBL" id="AP005672">
    <property type="protein sequence ID" value="BAC85083.1"/>
    <property type="molecule type" value="Genomic_DNA"/>
</dbReference>
<dbReference type="RefSeq" id="NP_904233.1">
    <property type="nucleotide sequence ID" value="NC_005087.2"/>
</dbReference>
<dbReference type="RefSeq" id="YP_009477563.1">
    <property type="nucleotide sequence ID" value="NC_037465.1"/>
</dbReference>
<dbReference type="SMR" id="P60407"/>
<dbReference type="FunCoup" id="P60407">
    <property type="interactions" value="983"/>
</dbReference>
<dbReference type="STRING" id="3218.P60407"/>
<dbReference type="GeneID" id="2546796"/>
<dbReference type="GeneID" id="36487196"/>
<dbReference type="KEGG" id="ppp:2546796"/>
<dbReference type="InParanoid" id="P60407"/>
<dbReference type="OrthoDB" id="563959at2759"/>
<dbReference type="Proteomes" id="UP000006727">
    <property type="component" value="Chloroplast"/>
</dbReference>
<dbReference type="GO" id="GO:0009507">
    <property type="term" value="C:chloroplast"/>
    <property type="evidence" value="ECO:0007669"/>
    <property type="project" value="UniProtKB-SubCell"/>
</dbReference>
<dbReference type="GO" id="GO:0005762">
    <property type="term" value="C:mitochondrial large ribosomal subunit"/>
    <property type="evidence" value="ECO:0000318"/>
    <property type="project" value="GO_Central"/>
</dbReference>
<dbReference type="GO" id="GO:0003723">
    <property type="term" value="F:RNA binding"/>
    <property type="evidence" value="ECO:0000318"/>
    <property type="project" value="GO_Central"/>
</dbReference>
<dbReference type="GO" id="GO:0019843">
    <property type="term" value="F:rRNA binding"/>
    <property type="evidence" value="ECO:0007669"/>
    <property type="project" value="UniProtKB-UniRule"/>
</dbReference>
<dbReference type="GO" id="GO:0003735">
    <property type="term" value="F:structural constituent of ribosome"/>
    <property type="evidence" value="ECO:0000318"/>
    <property type="project" value="GO_Central"/>
</dbReference>
<dbReference type="GO" id="GO:0016740">
    <property type="term" value="F:transferase activity"/>
    <property type="evidence" value="ECO:0007669"/>
    <property type="project" value="InterPro"/>
</dbReference>
<dbReference type="GO" id="GO:0032543">
    <property type="term" value="P:mitochondrial translation"/>
    <property type="evidence" value="ECO:0000318"/>
    <property type="project" value="GO_Central"/>
</dbReference>
<dbReference type="FunFam" id="2.40.50.140:FF:000003">
    <property type="entry name" value="50S ribosomal protein L2"/>
    <property type="match status" value="1"/>
</dbReference>
<dbReference type="FunFam" id="4.10.950.10:FF:000001">
    <property type="entry name" value="50S ribosomal protein L2"/>
    <property type="match status" value="1"/>
</dbReference>
<dbReference type="FunFam" id="2.30.30.30:FF:000008">
    <property type="entry name" value="50S ribosomal protein L2, chloroplastic"/>
    <property type="match status" value="1"/>
</dbReference>
<dbReference type="Gene3D" id="2.30.30.30">
    <property type="match status" value="1"/>
</dbReference>
<dbReference type="Gene3D" id="2.40.50.140">
    <property type="entry name" value="Nucleic acid-binding proteins"/>
    <property type="match status" value="1"/>
</dbReference>
<dbReference type="Gene3D" id="4.10.950.10">
    <property type="entry name" value="Ribosomal protein L2, domain 3"/>
    <property type="match status" value="1"/>
</dbReference>
<dbReference type="HAMAP" id="MF_01320_B">
    <property type="entry name" value="Ribosomal_uL2_B"/>
    <property type="match status" value="1"/>
</dbReference>
<dbReference type="InterPro" id="IPR012340">
    <property type="entry name" value="NA-bd_OB-fold"/>
</dbReference>
<dbReference type="InterPro" id="IPR014722">
    <property type="entry name" value="Rib_uL2_dom2"/>
</dbReference>
<dbReference type="InterPro" id="IPR002171">
    <property type="entry name" value="Ribosomal_uL2"/>
</dbReference>
<dbReference type="InterPro" id="IPR005880">
    <property type="entry name" value="Ribosomal_uL2_bac/org-type"/>
</dbReference>
<dbReference type="InterPro" id="IPR022669">
    <property type="entry name" value="Ribosomal_uL2_C"/>
</dbReference>
<dbReference type="InterPro" id="IPR022671">
    <property type="entry name" value="Ribosomal_uL2_CS"/>
</dbReference>
<dbReference type="InterPro" id="IPR014726">
    <property type="entry name" value="Ribosomal_uL2_dom3"/>
</dbReference>
<dbReference type="InterPro" id="IPR022666">
    <property type="entry name" value="Ribosomal_uL2_RNA-bd_dom"/>
</dbReference>
<dbReference type="InterPro" id="IPR008991">
    <property type="entry name" value="Translation_prot_SH3-like_sf"/>
</dbReference>
<dbReference type="NCBIfam" id="TIGR01171">
    <property type="entry name" value="rplB_bact"/>
    <property type="match status" value="1"/>
</dbReference>
<dbReference type="PANTHER" id="PTHR13691:SF5">
    <property type="entry name" value="LARGE RIBOSOMAL SUBUNIT PROTEIN UL2M"/>
    <property type="match status" value="1"/>
</dbReference>
<dbReference type="PANTHER" id="PTHR13691">
    <property type="entry name" value="RIBOSOMAL PROTEIN L2"/>
    <property type="match status" value="1"/>
</dbReference>
<dbReference type="Pfam" id="PF00181">
    <property type="entry name" value="Ribosomal_L2"/>
    <property type="match status" value="1"/>
</dbReference>
<dbReference type="Pfam" id="PF03947">
    <property type="entry name" value="Ribosomal_L2_C"/>
    <property type="match status" value="1"/>
</dbReference>
<dbReference type="PIRSF" id="PIRSF002158">
    <property type="entry name" value="Ribosomal_L2"/>
    <property type="match status" value="1"/>
</dbReference>
<dbReference type="SMART" id="SM01383">
    <property type="entry name" value="Ribosomal_L2"/>
    <property type="match status" value="1"/>
</dbReference>
<dbReference type="SMART" id="SM01382">
    <property type="entry name" value="Ribosomal_L2_C"/>
    <property type="match status" value="1"/>
</dbReference>
<dbReference type="SUPFAM" id="SSF50249">
    <property type="entry name" value="Nucleic acid-binding proteins"/>
    <property type="match status" value="1"/>
</dbReference>
<dbReference type="SUPFAM" id="SSF50104">
    <property type="entry name" value="Translation proteins SH3-like domain"/>
    <property type="match status" value="1"/>
</dbReference>
<dbReference type="PROSITE" id="PS00467">
    <property type="entry name" value="RIBOSOMAL_L2"/>
    <property type="match status" value="1"/>
</dbReference>
<sequence length="277" mass="30732">MTIRLYKAYTPGTRNRSVLGFKELVKTNPQKKLTFWQHNKQGRNNRGVITSRFRGGGHKRLYRQIDFRRNKKNISGKITTIEYDPNRTANICLVHYEDGEKRYILHPRGLKVGDTIISSNEAPILIGNALPLTNMPLGTAIHNIEITPGKGGQLVKSAGAVAKLIAKEGQLATLRLPSGEVRLVSQNSLATIGQIGNVDANNKTIGKAGAKRWLGKRPRVRGVVMNPIDHPHGGGEGRAPIGREKPLTPWGRTALGKRTRKIKKYSNPLILRRRKNG</sequence>
<reference key="1">
    <citation type="journal article" date="2003" name="Nucleic Acids Res.">
        <title>Complete chloroplast DNA sequence of the moss Physcomitrella patens: evidence for the loss and relocation of rpoA from the chloroplast to the nucleus.</title>
        <authorList>
            <person name="Sugiura C."/>
            <person name="Kobayashi Y."/>
            <person name="Setsuyuki A."/>
            <person name="Sugita C."/>
            <person name="Sugita M."/>
        </authorList>
    </citation>
    <scope>NUCLEOTIDE SEQUENCE [LARGE SCALE GENOMIC DNA]</scope>
    <source>
        <strain>cv. Gransden 2004</strain>
    </source>
</reference>
<comment type="subunit">
    <text evidence="1">Part of the 50S ribosomal subunit.</text>
</comment>
<comment type="subcellular location">
    <subcellularLocation>
        <location>Plastid</location>
        <location>Chloroplast</location>
    </subcellularLocation>
</comment>
<comment type="similarity">
    <text evidence="4">Belongs to the universal ribosomal protein uL2 family.</text>
</comment>
<organism>
    <name type="scientific">Physcomitrium patens</name>
    <name type="common">Spreading-leaved earth moss</name>
    <name type="synonym">Physcomitrella patens</name>
    <dbReference type="NCBI Taxonomy" id="3218"/>
    <lineage>
        <taxon>Eukaryota</taxon>
        <taxon>Viridiplantae</taxon>
        <taxon>Streptophyta</taxon>
        <taxon>Embryophyta</taxon>
        <taxon>Bryophyta</taxon>
        <taxon>Bryophytina</taxon>
        <taxon>Bryopsida</taxon>
        <taxon>Funariidae</taxon>
        <taxon>Funariales</taxon>
        <taxon>Funariaceae</taxon>
        <taxon>Physcomitrium</taxon>
    </lineage>
</organism>
<geneLocation type="chloroplast"/>
<keyword id="KW-0150">Chloroplast</keyword>
<keyword id="KW-0934">Plastid</keyword>
<keyword id="KW-1185">Reference proteome</keyword>
<keyword id="KW-0687">Ribonucleoprotein</keyword>
<keyword id="KW-0689">Ribosomal protein</keyword>
<feature type="chain" id="PRO_0000129694" description="Large ribosomal subunit protein uL2c">
    <location>
        <begin position="1"/>
        <end position="277"/>
    </location>
</feature>
<feature type="region of interest" description="Disordered" evidence="3">
    <location>
        <begin position="226"/>
        <end position="249"/>
    </location>
</feature>
<feature type="compositionally biased region" description="Basic and acidic residues" evidence="3">
    <location>
        <begin position="229"/>
        <end position="246"/>
    </location>
</feature>
<evidence type="ECO:0000250" key="1"/>
<evidence type="ECO:0000255" key="2">
    <source>
        <dbReference type="HAMAP-Rule" id="MF_01320"/>
    </source>
</evidence>
<evidence type="ECO:0000256" key="3">
    <source>
        <dbReference type="SAM" id="MobiDB-lite"/>
    </source>
</evidence>
<evidence type="ECO:0000305" key="4"/>
<accession>P60407</accession>